<proteinExistence type="inferred from homology"/>
<reference key="1">
    <citation type="submission" date="2007-06" db="EMBL/GenBank/DDBJ databases">
        <title>Complete sequence of chromosome of Staphylococcus aureus subsp. aureus JH1.</title>
        <authorList>
            <consortium name="US DOE Joint Genome Institute"/>
            <person name="Copeland A."/>
            <person name="Lucas S."/>
            <person name="Lapidus A."/>
            <person name="Barry K."/>
            <person name="Detter J.C."/>
            <person name="Glavina del Rio T."/>
            <person name="Hammon N."/>
            <person name="Israni S."/>
            <person name="Dalin E."/>
            <person name="Tice H."/>
            <person name="Pitluck S."/>
            <person name="Chain P."/>
            <person name="Malfatti S."/>
            <person name="Shin M."/>
            <person name="Vergez L."/>
            <person name="Schmutz J."/>
            <person name="Larimer F."/>
            <person name="Land M."/>
            <person name="Hauser L."/>
            <person name="Kyrpides N."/>
            <person name="Ivanova N."/>
            <person name="Tomasz A."/>
            <person name="Richardson P."/>
        </authorList>
    </citation>
    <scope>NUCLEOTIDE SEQUENCE [LARGE SCALE GENOMIC DNA]</scope>
    <source>
        <strain>JH1</strain>
    </source>
</reference>
<organism>
    <name type="scientific">Staphylococcus aureus (strain JH1)</name>
    <dbReference type="NCBI Taxonomy" id="359787"/>
    <lineage>
        <taxon>Bacteria</taxon>
        <taxon>Bacillati</taxon>
        <taxon>Bacillota</taxon>
        <taxon>Bacilli</taxon>
        <taxon>Bacillales</taxon>
        <taxon>Staphylococcaceae</taxon>
        <taxon>Staphylococcus</taxon>
    </lineage>
</organism>
<feature type="chain" id="PRO_1000080946" description="Aspartate 1-decarboxylase beta chain" evidence="1">
    <location>
        <begin position="1"/>
        <end position="24"/>
    </location>
</feature>
<feature type="chain" id="PRO_1000080947" description="Aspartate 1-decarboxylase alpha chain" evidence="1">
    <location>
        <begin position="25"/>
        <end position="127"/>
    </location>
</feature>
<feature type="active site" description="Schiff-base intermediate with substrate; via pyruvic acid" evidence="1">
    <location>
        <position position="25"/>
    </location>
</feature>
<feature type="active site" description="Proton donor" evidence="1">
    <location>
        <position position="58"/>
    </location>
</feature>
<feature type="binding site" evidence="1">
    <location>
        <position position="57"/>
    </location>
    <ligand>
        <name>substrate</name>
    </ligand>
</feature>
<feature type="binding site" evidence="1">
    <location>
        <begin position="73"/>
        <end position="75"/>
    </location>
    <ligand>
        <name>substrate</name>
    </ligand>
</feature>
<feature type="modified residue" description="Pyruvic acid (Ser)" evidence="1">
    <location>
        <position position="25"/>
    </location>
</feature>
<keyword id="KW-0068">Autocatalytic cleavage</keyword>
<keyword id="KW-0963">Cytoplasm</keyword>
<keyword id="KW-0210">Decarboxylase</keyword>
<keyword id="KW-0456">Lyase</keyword>
<keyword id="KW-0566">Pantothenate biosynthesis</keyword>
<keyword id="KW-0670">Pyruvate</keyword>
<keyword id="KW-0704">Schiff base</keyword>
<keyword id="KW-0865">Zymogen</keyword>
<sequence>MIRTMMNAKIHRARVTESNLNYVGSITIDSDILEAVDILPNEKVAIVNNNNGARFETYVIAGERGSGKICLNGAASRLVEVGDVVIIMTYAQLNEEEIKNHAPKVAVMNEDNVIIEMIHEKENTIVL</sequence>
<gene>
    <name evidence="1" type="primary">panD</name>
    <name type="ordered locus">SaurJH1_2673</name>
</gene>
<dbReference type="EC" id="4.1.1.11" evidence="1"/>
<dbReference type="EMBL" id="CP000736">
    <property type="protein sequence ID" value="ABR53495.1"/>
    <property type="molecule type" value="Genomic_DNA"/>
</dbReference>
<dbReference type="SMR" id="A6U4X7"/>
<dbReference type="KEGG" id="sah:SaurJH1_2673"/>
<dbReference type="HOGENOM" id="CLU_115305_2_0_9"/>
<dbReference type="UniPathway" id="UPA00028">
    <property type="reaction ID" value="UER00002"/>
</dbReference>
<dbReference type="GO" id="GO:0005829">
    <property type="term" value="C:cytosol"/>
    <property type="evidence" value="ECO:0007669"/>
    <property type="project" value="TreeGrafter"/>
</dbReference>
<dbReference type="GO" id="GO:0004068">
    <property type="term" value="F:aspartate 1-decarboxylase activity"/>
    <property type="evidence" value="ECO:0007669"/>
    <property type="project" value="UniProtKB-UniRule"/>
</dbReference>
<dbReference type="GO" id="GO:0006523">
    <property type="term" value="P:alanine biosynthetic process"/>
    <property type="evidence" value="ECO:0007669"/>
    <property type="project" value="InterPro"/>
</dbReference>
<dbReference type="GO" id="GO:0015940">
    <property type="term" value="P:pantothenate biosynthetic process"/>
    <property type="evidence" value="ECO:0007669"/>
    <property type="project" value="UniProtKB-UniRule"/>
</dbReference>
<dbReference type="CDD" id="cd06919">
    <property type="entry name" value="Asp_decarbox"/>
    <property type="match status" value="1"/>
</dbReference>
<dbReference type="Gene3D" id="2.40.40.20">
    <property type="match status" value="1"/>
</dbReference>
<dbReference type="HAMAP" id="MF_00446">
    <property type="entry name" value="PanD"/>
    <property type="match status" value="1"/>
</dbReference>
<dbReference type="InterPro" id="IPR009010">
    <property type="entry name" value="Asp_de-COase-like_dom_sf"/>
</dbReference>
<dbReference type="InterPro" id="IPR003190">
    <property type="entry name" value="Asp_decarbox"/>
</dbReference>
<dbReference type="NCBIfam" id="TIGR00223">
    <property type="entry name" value="panD"/>
    <property type="match status" value="1"/>
</dbReference>
<dbReference type="PANTHER" id="PTHR21012">
    <property type="entry name" value="ASPARTATE 1-DECARBOXYLASE"/>
    <property type="match status" value="1"/>
</dbReference>
<dbReference type="PANTHER" id="PTHR21012:SF0">
    <property type="entry name" value="ASPARTATE 1-DECARBOXYLASE"/>
    <property type="match status" value="1"/>
</dbReference>
<dbReference type="Pfam" id="PF02261">
    <property type="entry name" value="Asp_decarbox"/>
    <property type="match status" value="1"/>
</dbReference>
<dbReference type="PIRSF" id="PIRSF006246">
    <property type="entry name" value="Asp_decarbox"/>
    <property type="match status" value="1"/>
</dbReference>
<dbReference type="SUPFAM" id="SSF50692">
    <property type="entry name" value="ADC-like"/>
    <property type="match status" value="1"/>
</dbReference>
<protein>
    <recommendedName>
        <fullName evidence="1">Aspartate 1-decarboxylase</fullName>
        <ecNumber evidence="1">4.1.1.11</ecNumber>
    </recommendedName>
    <alternativeName>
        <fullName evidence="1">Aspartate alpha-decarboxylase</fullName>
    </alternativeName>
    <component>
        <recommendedName>
            <fullName evidence="1">Aspartate 1-decarboxylase beta chain</fullName>
        </recommendedName>
    </component>
    <component>
        <recommendedName>
            <fullName evidence="1">Aspartate 1-decarboxylase alpha chain</fullName>
        </recommendedName>
    </component>
</protein>
<name>PAND_STAA2</name>
<evidence type="ECO:0000255" key="1">
    <source>
        <dbReference type="HAMAP-Rule" id="MF_00446"/>
    </source>
</evidence>
<accession>A6U4X7</accession>
<comment type="function">
    <text evidence="1">Catalyzes the pyruvoyl-dependent decarboxylation of aspartate to produce beta-alanine.</text>
</comment>
<comment type="catalytic activity">
    <reaction evidence="1">
        <text>L-aspartate + H(+) = beta-alanine + CO2</text>
        <dbReference type="Rhea" id="RHEA:19497"/>
        <dbReference type="ChEBI" id="CHEBI:15378"/>
        <dbReference type="ChEBI" id="CHEBI:16526"/>
        <dbReference type="ChEBI" id="CHEBI:29991"/>
        <dbReference type="ChEBI" id="CHEBI:57966"/>
        <dbReference type="EC" id="4.1.1.11"/>
    </reaction>
</comment>
<comment type="cofactor">
    <cofactor evidence="1">
        <name>pyruvate</name>
        <dbReference type="ChEBI" id="CHEBI:15361"/>
    </cofactor>
    <text evidence="1">Binds 1 pyruvoyl group covalently per subunit.</text>
</comment>
<comment type="pathway">
    <text evidence="1">Cofactor biosynthesis; (R)-pantothenate biosynthesis; beta-alanine from L-aspartate: step 1/1.</text>
</comment>
<comment type="subunit">
    <text evidence="1">Heterooctamer of four alpha and four beta subunits.</text>
</comment>
<comment type="subcellular location">
    <subcellularLocation>
        <location evidence="1">Cytoplasm</location>
    </subcellularLocation>
</comment>
<comment type="PTM">
    <text evidence="1">Is synthesized initially as an inactive proenzyme, which is activated by self-cleavage at a specific serine bond to produce a beta-subunit with a hydroxyl group at its C-terminus and an alpha-subunit with a pyruvoyl group at its N-terminus.</text>
</comment>
<comment type="similarity">
    <text evidence="1">Belongs to the PanD family.</text>
</comment>